<keyword id="KW-0028">Amino-acid biosynthesis</keyword>
<keyword id="KW-0963">Cytoplasm</keyword>
<keyword id="KW-0368">Histidine biosynthesis</keyword>
<keyword id="KW-0456">Lyase</keyword>
<comment type="function">
    <text evidence="1">IGPS catalyzes the conversion of PRFAR and glutamine to IGP, AICAR and glutamate. The HisF subunit catalyzes the cyclization activity that produces IGP and AICAR from PRFAR using the ammonia provided by the HisH subunit.</text>
</comment>
<comment type="catalytic activity">
    <reaction evidence="1">
        <text>5-[(5-phospho-1-deoxy-D-ribulos-1-ylimino)methylamino]-1-(5-phospho-beta-D-ribosyl)imidazole-4-carboxamide + L-glutamine = D-erythro-1-(imidazol-4-yl)glycerol 3-phosphate + 5-amino-1-(5-phospho-beta-D-ribosyl)imidazole-4-carboxamide + L-glutamate + H(+)</text>
        <dbReference type="Rhea" id="RHEA:24793"/>
        <dbReference type="ChEBI" id="CHEBI:15378"/>
        <dbReference type="ChEBI" id="CHEBI:29985"/>
        <dbReference type="ChEBI" id="CHEBI:58278"/>
        <dbReference type="ChEBI" id="CHEBI:58359"/>
        <dbReference type="ChEBI" id="CHEBI:58475"/>
        <dbReference type="ChEBI" id="CHEBI:58525"/>
        <dbReference type="EC" id="4.3.2.10"/>
    </reaction>
</comment>
<comment type="pathway">
    <text evidence="1">Amino-acid biosynthesis; L-histidine biosynthesis; L-histidine from 5-phospho-alpha-D-ribose 1-diphosphate: step 5/9.</text>
</comment>
<comment type="subunit">
    <text evidence="1">Heterodimer of HisH and HisF.</text>
</comment>
<comment type="subcellular location">
    <subcellularLocation>
        <location evidence="1">Cytoplasm</location>
    </subcellularLocation>
</comment>
<comment type="similarity">
    <text evidence="1">Belongs to the HisA/HisF family.</text>
</comment>
<dbReference type="EC" id="4.3.2.10" evidence="1"/>
<dbReference type="EMBL" id="CP000348">
    <property type="protein sequence ID" value="ABJ79313.1"/>
    <property type="molecule type" value="Genomic_DNA"/>
</dbReference>
<dbReference type="RefSeq" id="WP_002730840.1">
    <property type="nucleotide sequence ID" value="NC_008508.1"/>
</dbReference>
<dbReference type="SMR" id="Q050D2"/>
<dbReference type="GeneID" id="61173819"/>
<dbReference type="KEGG" id="lbl:LBL_1878"/>
<dbReference type="HOGENOM" id="CLU_048577_4_0_12"/>
<dbReference type="UniPathway" id="UPA00031">
    <property type="reaction ID" value="UER00010"/>
</dbReference>
<dbReference type="GO" id="GO:0005737">
    <property type="term" value="C:cytoplasm"/>
    <property type="evidence" value="ECO:0007669"/>
    <property type="project" value="UniProtKB-SubCell"/>
</dbReference>
<dbReference type="GO" id="GO:0000107">
    <property type="term" value="F:imidazoleglycerol-phosphate synthase activity"/>
    <property type="evidence" value="ECO:0007669"/>
    <property type="project" value="UniProtKB-UniRule"/>
</dbReference>
<dbReference type="GO" id="GO:0016829">
    <property type="term" value="F:lyase activity"/>
    <property type="evidence" value="ECO:0007669"/>
    <property type="project" value="UniProtKB-KW"/>
</dbReference>
<dbReference type="GO" id="GO:0000105">
    <property type="term" value="P:L-histidine biosynthetic process"/>
    <property type="evidence" value="ECO:0007669"/>
    <property type="project" value="UniProtKB-UniRule"/>
</dbReference>
<dbReference type="CDD" id="cd04731">
    <property type="entry name" value="HisF"/>
    <property type="match status" value="1"/>
</dbReference>
<dbReference type="FunFam" id="3.20.20.70:FF:000006">
    <property type="entry name" value="Imidazole glycerol phosphate synthase subunit HisF"/>
    <property type="match status" value="1"/>
</dbReference>
<dbReference type="Gene3D" id="3.20.20.70">
    <property type="entry name" value="Aldolase class I"/>
    <property type="match status" value="1"/>
</dbReference>
<dbReference type="HAMAP" id="MF_01013">
    <property type="entry name" value="HisF"/>
    <property type="match status" value="1"/>
</dbReference>
<dbReference type="InterPro" id="IPR013785">
    <property type="entry name" value="Aldolase_TIM"/>
</dbReference>
<dbReference type="InterPro" id="IPR006062">
    <property type="entry name" value="His_biosynth"/>
</dbReference>
<dbReference type="InterPro" id="IPR004651">
    <property type="entry name" value="HisF"/>
</dbReference>
<dbReference type="InterPro" id="IPR050064">
    <property type="entry name" value="IGPS_HisA/HisF"/>
</dbReference>
<dbReference type="InterPro" id="IPR011060">
    <property type="entry name" value="RibuloseP-bd_barrel"/>
</dbReference>
<dbReference type="NCBIfam" id="TIGR00735">
    <property type="entry name" value="hisF"/>
    <property type="match status" value="1"/>
</dbReference>
<dbReference type="PANTHER" id="PTHR21235:SF2">
    <property type="entry name" value="IMIDAZOLE GLYCEROL PHOSPHATE SYNTHASE HISHF"/>
    <property type="match status" value="1"/>
</dbReference>
<dbReference type="PANTHER" id="PTHR21235">
    <property type="entry name" value="IMIDAZOLE GLYCEROL PHOSPHATE SYNTHASE SUBUNIT HISF/H IGP SYNTHASE SUBUNIT HISF/H"/>
    <property type="match status" value="1"/>
</dbReference>
<dbReference type="Pfam" id="PF00977">
    <property type="entry name" value="His_biosynth"/>
    <property type="match status" value="1"/>
</dbReference>
<dbReference type="SUPFAM" id="SSF51366">
    <property type="entry name" value="Ribulose-phoshate binding barrel"/>
    <property type="match status" value="1"/>
</dbReference>
<sequence length="256" mass="27972">MSNLTARVIPCLDIKDGRVVKGVNFVDLVDAGDPVESAGIYEENLADELCFLDITASSDRREILLHLVERIAEKIFIPFTVGGGIRTVADVKAVLEKGADKISINTAAFQNPELLTHSSEIYGSQCIVCAIDVKFQKERDRYEIFLHGGRTETGREALDWAREAVGRGAGEILLTSMDRDGTRNGFDINLLKSFSSSLEIPIIASGGAGNPEHMVEAILRGKADAVLAASIFHFGEYSIRETKRAMQEMGISVRLD</sequence>
<evidence type="ECO:0000255" key="1">
    <source>
        <dbReference type="HAMAP-Rule" id="MF_01013"/>
    </source>
</evidence>
<accession>Q050D2</accession>
<gene>
    <name evidence="1" type="primary">hisF</name>
    <name type="ordered locus">LBL_1878</name>
</gene>
<proteinExistence type="inferred from homology"/>
<feature type="chain" id="PRO_1000063077" description="Imidazole glycerol phosphate synthase subunit HisF">
    <location>
        <begin position="1"/>
        <end position="256"/>
    </location>
</feature>
<feature type="active site" evidence="1">
    <location>
        <position position="13"/>
    </location>
</feature>
<feature type="active site" evidence="1">
    <location>
        <position position="132"/>
    </location>
</feature>
<reference key="1">
    <citation type="journal article" date="2006" name="Proc. Natl. Acad. Sci. U.S.A.">
        <title>Genome reduction in Leptospira borgpetersenii reflects limited transmission potential.</title>
        <authorList>
            <person name="Bulach D.M."/>
            <person name="Zuerner R.L."/>
            <person name="Wilson P."/>
            <person name="Seemann T."/>
            <person name="McGrath A."/>
            <person name="Cullen P.A."/>
            <person name="Davis J."/>
            <person name="Johnson M."/>
            <person name="Kuczek E."/>
            <person name="Alt D.P."/>
            <person name="Peterson-Burch B."/>
            <person name="Coppel R.L."/>
            <person name="Rood J.I."/>
            <person name="Davies J.K."/>
            <person name="Adler B."/>
        </authorList>
    </citation>
    <scope>NUCLEOTIDE SEQUENCE [LARGE SCALE GENOMIC DNA]</scope>
    <source>
        <strain>L550</strain>
    </source>
</reference>
<organism>
    <name type="scientific">Leptospira borgpetersenii serovar Hardjo-bovis (strain L550)</name>
    <dbReference type="NCBI Taxonomy" id="355276"/>
    <lineage>
        <taxon>Bacteria</taxon>
        <taxon>Pseudomonadati</taxon>
        <taxon>Spirochaetota</taxon>
        <taxon>Spirochaetia</taxon>
        <taxon>Leptospirales</taxon>
        <taxon>Leptospiraceae</taxon>
        <taxon>Leptospira</taxon>
    </lineage>
</organism>
<name>HIS6_LEPBL</name>
<protein>
    <recommendedName>
        <fullName evidence="1">Imidazole glycerol phosphate synthase subunit HisF</fullName>
        <ecNumber evidence="1">4.3.2.10</ecNumber>
    </recommendedName>
    <alternativeName>
        <fullName evidence="1">IGP synthase cyclase subunit</fullName>
    </alternativeName>
    <alternativeName>
        <fullName evidence="1">IGP synthase subunit HisF</fullName>
    </alternativeName>
    <alternativeName>
        <fullName evidence="1">ImGP synthase subunit HisF</fullName>
        <shortName evidence="1">IGPS subunit HisF</shortName>
    </alternativeName>
</protein>